<sequence length="249" mass="29048">MHGLFVNKKKNDTGSTALVLKKIQSGDTKLKEEFIKDNVPYIIRTISNILGIVVDDRNSEEFSIGLAAFNEAIDRYDADKNGNFYTYSFVVIKSRLYDFIRRNRKHNNVLPFSYIEESTRVDERLLMSDASGQFEKIEVRQELVSFEKSLKEFGISLEDLVLSSPKHKDSRLLLIKIARIIADDDNMFRKLVEKKYIPMKEVLSRIKVNHKTIQRNRKFIIAVSLILRSNLYDLKEYVQGFEREGKYHG</sequence>
<gene>
    <name evidence="6" type="primary">sigI3</name>
    <name evidence="10" type="ordered locus">Cthe_0315</name>
</gene>
<organism>
    <name type="scientific">Acetivibrio thermocellus (strain ATCC 27405 / DSM 1237 / JCM 9322 / NBRC 103400 / NCIMB 10682 / NRRL B-4536 / VPI 7372)</name>
    <name type="common">Clostridium thermocellum</name>
    <dbReference type="NCBI Taxonomy" id="203119"/>
    <lineage>
        <taxon>Bacteria</taxon>
        <taxon>Bacillati</taxon>
        <taxon>Bacillota</taxon>
        <taxon>Clostridia</taxon>
        <taxon>Eubacteriales</taxon>
        <taxon>Oscillospiraceae</taxon>
        <taxon>Acetivibrio</taxon>
    </lineage>
</organism>
<dbReference type="EMBL" id="CP000568">
    <property type="protein sequence ID" value="ABN51553.1"/>
    <property type="molecule type" value="Genomic_DNA"/>
</dbReference>
<dbReference type="EMBL" id="KM504391">
    <property type="protein sequence ID" value="AIY67764.1"/>
    <property type="molecule type" value="Genomic_DNA"/>
</dbReference>
<dbReference type="SMR" id="A3DC74"/>
<dbReference type="STRING" id="203119.Cthe_0315"/>
<dbReference type="GeneID" id="35803157"/>
<dbReference type="KEGG" id="cth:Cthe_0315"/>
<dbReference type="eggNOG" id="COG1191">
    <property type="taxonomic scope" value="Bacteria"/>
</dbReference>
<dbReference type="HOGENOM" id="CLU_082361_0_0_9"/>
<dbReference type="OrthoDB" id="3190733at2"/>
<dbReference type="Proteomes" id="UP000002145">
    <property type="component" value="Chromosome"/>
</dbReference>
<dbReference type="GO" id="GO:0005737">
    <property type="term" value="C:cytoplasm"/>
    <property type="evidence" value="ECO:0007669"/>
    <property type="project" value="UniProtKB-SubCell"/>
</dbReference>
<dbReference type="GO" id="GO:0003677">
    <property type="term" value="F:DNA binding"/>
    <property type="evidence" value="ECO:0007669"/>
    <property type="project" value="UniProtKB-UniRule"/>
</dbReference>
<dbReference type="GO" id="GO:0016987">
    <property type="term" value="F:sigma factor activity"/>
    <property type="evidence" value="ECO:0007669"/>
    <property type="project" value="UniProtKB-UniRule"/>
</dbReference>
<dbReference type="GO" id="GO:0006352">
    <property type="term" value="P:DNA-templated transcription initiation"/>
    <property type="evidence" value="ECO:0007669"/>
    <property type="project" value="UniProtKB-UniRule"/>
</dbReference>
<dbReference type="Gene3D" id="1.10.1740.10">
    <property type="match status" value="1"/>
</dbReference>
<dbReference type="HAMAP" id="MF_02064">
    <property type="entry name" value="Sigma70_SigI"/>
    <property type="match status" value="1"/>
</dbReference>
<dbReference type="InterPro" id="IPR014244">
    <property type="entry name" value="RNA_pol_sigma-I"/>
</dbReference>
<dbReference type="InterPro" id="IPR007627">
    <property type="entry name" value="RNA_pol_sigma70_r2"/>
</dbReference>
<dbReference type="InterPro" id="IPR013325">
    <property type="entry name" value="RNA_pol_sigma_r2"/>
</dbReference>
<dbReference type="NCBIfam" id="NF006173">
    <property type="entry name" value="PRK08311.2-1"/>
    <property type="match status" value="1"/>
</dbReference>
<dbReference type="NCBIfam" id="TIGR02895">
    <property type="entry name" value="spore_sigI"/>
    <property type="match status" value="1"/>
</dbReference>
<dbReference type="Pfam" id="PF04542">
    <property type="entry name" value="Sigma70_r2"/>
    <property type="match status" value="1"/>
</dbReference>
<dbReference type="PIRSF" id="PIRSF038953">
    <property type="entry name" value="SigI"/>
    <property type="match status" value="1"/>
</dbReference>
<dbReference type="SUPFAM" id="SSF88946">
    <property type="entry name" value="Sigma2 domain of RNA polymerase sigma factors"/>
    <property type="match status" value="1"/>
</dbReference>
<reference key="1">
    <citation type="submission" date="2007-02" db="EMBL/GenBank/DDBJ databases">
        <title>Complete sequence of Clostridium thermocellum ATCC 27405.</title>
        <authorList>
            <consortium name="US DOE Joint Genome Institute"/>
            <person name="Copeland A."/>
            <person name="Lucas S."/>
            <person name="Lapidus A."/>
            <person name="Barry K."/>
            <person name="Detter J.C."/>
            <person name="Glavina del Rio T."/>
            <person name="Hammon N."/>
            <person name="Israni S."/>
            <person name="Dalin E."/>
            <person name="Tice H."/>
            <person name="Pitluck S."/>
            <person name="Chertkov O."/>
            <person name="Brettin T."/>
            <person name="Bruce D."/>
            <person name="Han C."/>
            <person name="Tapia R."/>
            <person name="Gilna P."/>
            <person name="Schmutz J."/>
            <person name="Larimer F."/>
            <person name="Land M."/>
            <person name="Hauser L."/>
            <person name="Kyrpides N."/>
            <person name="Mikhailova N."/>
            <person name="Wu J.H.D."/>
            <person name="Newcomb M."/>
            <person name="Richardson P."/>
        </authorList>
    </citation>
    <scope>NUCLEOTIDE SEQUENCE [LARGE SCALE GENOMIC DNA]</scope>
    <source>
        <strain>ATCC 27405 / DSM 1237 / JCM 9322 / NBRC 103400 / NCIMB 10682 / NRRL B-4536 / VPI 7372</strain>
    </source>
</reference>
<reference key="2">
    <citation type="submission" date="2014-09" db="EMBL/GenBank/DDBJ databases">
        <authorList>
            <person name="Borovok I."/>
        </authorList>
    </citation>
    <scope>NUCLEOTIDE SEQUENCE [GENOMIC DNA]</scope>
</reference>
<reference key="3">
    <citation type="journal article" date="2010" name="FEMS Microbiol. Lett.">
        <title>The unique set of putative membrane-associated anti-sigma factors in Clostridium thermocellum suggests a novel extracellular carbohydrate-sensing mechanism involved in gene regulation.</title>
        <authorList>
            <person name="Kahel-Raifer H."/>
            <person name="Jindou S."/>
            <person name="Bahari L."/>
            <person name="Nataf Y."/>
            <person name="Shoham Y."/>
            <person name="Bayer E.A."/>
            <person name="Borovok I."/>
            <person name="Lamed R."/>
        </authorList>
    </citation>
    <scope>NOMENCLATURE</scope>
    <source>
        <strain>ATCC 27405 / DSM 1237 / JCM 9322 / NBRC 103400 / NCIMB 10682 / NRRL B-4536 / VPI 7372</strain>
    </source>
</reference>
<reference key="4">
    <citation type="journal article" date="2010" name="Proc. Natl. Acad. Sci. U.S.A.">
        <title>Clostridium thermocellum cellulosomal genes are regulated by extracytoplasmic polysaccharides via alternative sigma factors.</title>
        <authorList>
            <person name="Nataf Y."/>
            <person name="Bahari L."/>
            <person name="Kahel-Raifer H."/>
            <person name="Borovok I."/>
            <person name="Lamed R."/>
            <person name="Bayer E.A."/>
            <person name="Sonenshein A.L."/>
            <person name="Shoham Y."/>
        </authorList>
    </citation>
    <scope>FUNCTION</scope>
    <scope>INDUCTION</scope>
</reference>
<reference key="5">
    <citation type="journal article" date="2014" name="Front. Microbiol.">
        <title>Comparison of transcriptional profiles of Clostridium thermocellum grown on cellobiose and pretreated yellow poplar using RNA-Seq.</title>
        <authorList>
            <person name="Wei H."/>
            <person name="Fu Y."/>
            <person name="Magnusson L."/>
            <person name="Baker J.O."/>
            <person name="Maness P.C."/>
            <person name="Xu Q."/>
            <person name="Yang S."/>
            <person name="Bowersox A."/>
            <person name="Bogorad I."/>
            <person name="Wang W."/>
            <person name="Tucker M.P."/>
            <person name="Himmel M.E."/>
            <person name="Ding S.Y."/>
        </authorList>
    </citation>
    <scope>INDUCTION</scope>
    <source>
        <strain>ATCC 27405 / DSM 1237 / JCM 9322 / NBRC 103400 / NCIMB 10682 / NRRL B-4536 / VPI 7372</strain>
    </source>
</reference>
<reference key="6">
    <citation type="journal article" date="2016" name="PLoS ONE">
        <title>Decoding biomass-sensing regulons of Clostridium thermocellum alternative sigma-I factors in a heterologous Bacillus subtilis host system.</title>
        <authorList>
            <person name="Munoz-Gutierrez I."/>
            <person name="Ortiz de Ora L."/>
            <person name="Rozman Grinberg I."/>
            <person name="Garty Y."/>
            <person name="Bayer E.A."/>
            <person name="Shoham Y."/>
            <person name="Lamed R."/>
            <person name="Borovok I."/>
        </authorList>
    </citation>
    <scope>FUNCTION</scope>
    <scope>INDUCTION</scope>
</reference>
<protein>
    <recommendedName>
        <fullName evidence="7">RNA polymerase sigma factor SigI3</fullName>
    </recommendedName>
</protein>
<proteinExistence type="evidence at transcript level"/>
<evidence type="ECO:0000250" key="1">
    <source>
        <dbReference type="UniProtKB" id="A3DBH0"/>
    </source>
</evidence>
<evidence type="ECO:0000255" key="2">
    <source>
        <dbReference type="HAMAP-Rule" id="MF_02064"/>
    </source>
</evidence>
<evidence type="ECO:0000269" key="3">
    <source>
    </source>
</evidence>
<evidence type="ECO:0000269" key="4">
    <source>
    </source>
</evidence>
<evidence type="ECO:0000269" key="5">
    <source>
    </source>
</evidence>
<evidence type="ECO:0000303" key="6">
    <source>
    </source>
</evidence>
<evidence type="ECO:0000305" key="7"/>
<evidence type="ECO:0000305" key="8">
    <source>
    </source>
</evidence>
<evidence type="ECO:0000305" key="9">
    <source>
    </source>
</evidence>
<evidence type="ECO:0000312" key="10">
    <source>
        <dbReference type="EMBL" id="ABN51553.1"/>
    </source>
</evidence>
<name>SIGI3_ACET2</name>
<accession>A3DC74</accession>
<feature type="chain" id="PRO_0000436517" description="RNA polymerase sigma factor SigI3">
    <location>
        <begin position="1"/>
        <end position="249"/>
    </location>
</feature>
<feature type="DNA-binding region" description="H-T-H motif" evidence="2">
    <location>
        <begin position="199"/>
        <end position="218"/>
    </location>
</feature>
<feature type="short sequence motif" description="Polymerase core binding" evidence="2">
    <location>
        <begin position="60"/>
        <end position="73"/>
    </location>
</feature>
<comment type="function">
    <text evidence="2 5 8">Sigma factors are initiation factors that promote the attachment of RNA polymerase to specific initiation sites and are then released (By similarity). This sigma factor is involved in regulation of cellulosomal genes via an external polysaccharide-sensing mechanism (Probable). Recognizes the predicted promoters associated with sigI3 itself, pl11, ce12 and cipA (PubMed:26731480).</text>
</comment>
<comment type="activity regulation">
    <text evidence="1 2">Negatively regulated by the anti-sigma-I factor RsgI3 (By similarity). Binding of the polysaccharide substrate to RsgI3 may lead to the release and activation of SigI3 (By similarity).</text>
</comment>
<comment type="subunit">
    <text evidence="2">Interacts with RsgI3.</text>
</comment>
<comment type="subcellular location">
    <subcellularLocation>
        <location evidence="2">Cytoplasm</location>
    </subcellularLocation>
</comment>
<comment type="induction">
    <text evidence="3 4 9">Autoregulated (Probable). Up-regulated in the presence of xylan (PubMed:20937888). Up-regulated in pretreated yellow poplar (PYP)-grown cells (PubMed:24782837).</text>
</comment>
<comment type="similarity">
    <text evidence="2">Belongs to the sigma-70 factor family. SigI subfamily.</text>
</comment>
<keyword id="KW-0963">Cytoplasm</keyword>
<keyword id="KW-0238">DNA-binding</keyword>
<keyword id="KW-1185">Reference proteome</keyword>
<keyword id="KW-0731">Sigma factor</keyword>
<keyword id="KW-0804">Transcription</keyword>
<keyword id="KW-0805">Transcription regulation</keyword>